<proteinExistence type="evidence at protein level"/>
<keyword id="KW-0963">Cytoplasm</keyword>
<keyword id="KW-0378">Hydrolase</keyword>
<keyword id="KW-0464">Manganese</keyword>
<keyword id="KW-0479">Metal-binding</keyword>
<keyword id="KW-0539">Nucleus</keyword>
<keyword id="KW-0904">Protein phosphatase</keyword>
<keyword id="KW-1185">Reference proteome</keyword>
<reference key="1">
    <citation type="journal article" date="1999" name="Braz. J. Med. Biol. Res.">
        <title>Searching for the role of protein phosphatases in eukaryotic microorganisms.</title>
        <authorList>
            <person name="da-Silva A.M."/>
            <person name="Zapella P.D.A."/>
            <person name="Andrioli L.P.M."/>
            <person name="Campanha R.B."/>
            <person name="Fiorini L.C."/>
            <person name="Etchebehere L.C."/>
            <person name="da-Costa-Maia J.C."/>
            <person name="Terenzi H.F."/>
        </authorList>
    </citation>
    <scope>NUCLEOTIDE SEQUENCE [MRNA]</scope>
    <source>
        <strain>AX4</strain>
    </source>
</reference>
<reference key="2">
    <citation type="journal article" date="2002" name="Nature">
        <title>Sequence and analysis of chromosome 2 of Dictyostelium discoideum.</title>
        <authorList>
            <person name="Gloeckner G."/>
            <person name="Eichinger L."/>
            <person name="Szafranski K."/>
            <person name="Pachebat J.A."/>
            <person name="Bankier A.T."/>
            <person name="Dear P.H."/>
            <person name="Lehmann R."/>
            <person name="Baumgart C."/>
            <person name="Parra G."/>
            <person name="Abril J.F."/>
            <person name="Guigo R."/>
            <person name="Kumpf K."/>
            <person name="Tunggal B."/>
            <person name="Cox E.C."/>
            <person name="Quail M.A."/>
            <person name="Platzer M."/>
            <person name="Rosenthal A."/>
            <person name="Noegel A.A."/>
        </authorList>
    </citation>
    <scope>NUCLEOTIDE SEQUENCE [LARGE SCALE GENOMIC DNA]</scope>
    <source>
        <strain>AX4</strain>
    </source>
</reference>
<reference key="3">
    <citation type="journal article" date="2005" name="Nature">
        <title>The genome of the social amoeba Dictyostelium discoideum.</title>
        <authorList>
            <person name="Eichinger L."/>
            <person name="Pachebat J.A."/>
            <person name="Gloeckner G."/>
            <person name="Rajandream M.A."/>
            <person name="Sucgang R."/>
            <person name="Berriman M."/>
            <person name="Song J."/>
            <person name="Olsen R."/>
            <person name="Szafranski K."/>
            <person name="Xu Q."/>
            <person name="Tunggal B."/>
            <person name="Kummerfeld S."/>
            <person name="Madera M."/>
            <person name="Konfortov B.A."/>
            <person name="Rivero F."/>
            <person name="Bankier A.T."/>
            <person name="Lehmann R."/>
            <person name="Hamlin N."/>
            <person name="Davies R."/>
            <person name="Gaudet P."/>
            <person name="Fey P."/>
            <person name="Pilcher K."/>
            <person name="Chen G."/>
            <person name="Saunders D."/>
            <person name="Sodergren E.J."/>
            <person name="Davis P."/>
            <person name="Kerhornou A."/>
            <person name="Nie X."/>
            <person name="Hall N."/>
            <person name="Anjard C."/>
            <person name="Hemphill L."/>
            <person name="Bason N."/>
            <person name="Farbrother P."/>
            <person name="Desany B."/>
            <person name="Just E."/>
            <person name="Morio T."/>
            <person name="Rost R."/>
            <person name="Churcher C.M."/>
            <person name="Cooper J."/>
            <person name="Haydock S."/>
            <person name="van Driessche N."/>
            <person name="Cronin A."/>
            <person name="Goodhead I."/>
            <person name="Muzny D.M."/>
            <person name="Mourier T."/>
            <person name="Pain A."/>
            <person name="Lu M."/>
            <person name="Harper D."/>
            <person name="Lindsay R."/>
            <person name="Hauser H."/>
            <person name="James K.D."/>
            <person name="Quiles M."/>
            <person name="Madan Babu M."/>
            <person name="Saito T."/>
            <person name="Buchrieser C."/>
            <person name="Wardroper A."/>
            <person name="Felder M."/>
            <person name="Thangavelu M."/>
            <person name="Johnson D."/>
            <person name="Knights A."/>
            <person name="Loulseged H."/>
            <person name="Mungall K.L."/>
            <person name="Oliver K."/>
            <person name="Price C."/>
            <person name="Quail M.A."/>
            <person name="Urushihara H."/>
            <person name="Hernandez J."/>
            <person name="Rabbinowitsch E."/>
            <person name="Steffen D."/>
            <person name="Sanders M."/>
            <person name="Ma J."/>
            <person name="Kohara Y."/>
            <person name="Sharp S."/>
            <person name="Simmonds M.N."/>
            <person name="Spiegler S."/>
            <person name="Tivey A."/>
            <person name="Sugano S."/>
            <person name="White B."/>
            <person name="Walker D."/>
            <person name="Woodward J.R."/>
            <person name="Winckler T."/>
            <person name="Tanaka Y."/>
            <person name="Shaulsky G."/>
            <person name="Schleicher M."/>
            <person name="Weinstock G.M."/>
            <person name="Rosenthal A."/>
            <person name="Cox E.C."/>
            <person name="Chisholm R.L."/>
            <person name="Gibbs R.A."/>
            <person name="Loomis W.F."/>
            <person name="Platzer M."/>
            <person name="Kay R.R."/>
            <person name="Williams J.G."/>
            <person name="Dear P.H."/>
            <person name="Noegel A.A."/>
            <person name="Barrell B.G."/>
            <person name="Kuspa A."/>
        </authorList>
    </citation>
    <scope>NUCLEOTIDE SEQUENCE [LARGE SCALE GENOMIC DNA]</scope>
    <source>
        <strain>AX4</strain>
    </source>
</reference>
<reference key="4">
    <citation type="journal article" date="2007" name="Mol. Cell. Biol.">
        <title>MEK1 and protein phosphatase 4 coordinate Dictyostelium development and chemotaxis.</title>
        <authorList>
            <person name="Mendoza M.C."/>
            <person name="Booth E.O."/>
            <person name="Shaulsky G."/>
            <person name="Firtel R.A."/>
        </authorList>
    </citation>
    <scope>FUNCTION</scope>
    <scope>SUBCELLULAR LOCATION</scope>
    <scope>INTERACTION WITH SMKA AND PPP4R2</scope>
</reference>
<organism>
    <name type="scientific">Dictyostelium discoideum</name>
    <name type="common">Social amoeba</name>
    <dbReference type="NCBI Taxonomy" id="44689"/>
    <lineage>
        <taxon>Eukaryota</taxon>
        <taxon>Amoebozoa</taxon>
        <taxon>Evosea</taxon>
        <taxon>Eumycetozoa</taxon>
        <taxon>Dictyostelia</taxon>
        <taxon>Dictyosteliales</taxon>
        <taxon>Dictyosteliaceae</taxon>
        <taxon>Dictyostelium</taxon>
    </lineage>
</organism>
<evidence type="ECO:0000250" key="1"/>
<evidence type="ECO:0000269" key="2">
    <source>
    </source>
</evidence>
<evidence type="ECO:0000305" key="3"/>
<sequence length="305" mass="34862">MSSDLDRQIEQLKRCEIIKESEVRALCSKAREILLEEGNVQRVDSPVTICGDIHGQFYDLKELFKVGGDCPQTNYLFMGDFVDRGFYSVETFLLLLALKVRYPDRITLIRGNHESRQITQVYGFYEECVRKYGSVTVWKYCTEIFDYLSLSALVDGKIFCVHGGLSPSINTLDQIRAIDRKQEVPHEGPMCDLMWSDPEDIPGWNGSPRGAGFLFGEDVVQKFNHDNNLEFICRAHQLVMEGFKYMFNETLVTVWSAPNYCYRCGNVAAILQLDENLKKNFAIFEAAPQESRGAPAKKPAPEYFL</sequence>
<gene>
    <name type="primary">ppp4c</name>
    <name type="synonym">pppC</name>
    <name type="ORF">DDB_G0272116</name>
</gene>
<accession>Q9Y0B7</accession>
<accession>Q559Z8</accession>
<dbReference type="EC" id="3.1.3.16"/>
<dbReference type="EMBL" id="AF161253">
    <property type="protein sequence ID" value="AAD43137.1"/>
    <property type="molecule type" value="mRNA"/>
</dbReference>
<dbReference type="EMBL" id="AAFI02000008">
    <property type="protein sequence ID" value="EAL71210.1"/>
    <property type="molecule type" value="Genomic_DNA"/>
</dbReference>
<dbReference type="RefSeq" id="XP_645186.1">
    <property type="nucleotide sequence ID" value="XM_640094.1"/>
</dbReference>
<dbReference type="SMR" id="Q9Y0B7"/>
<dbReference type="FunCoup" id="Q9Y0B7">
    <property type="interactions" value="612"/>
</dbReference>
<dbReference type="IntAct" id="Q9Y0B7">
    <property type="interactions" value="1"/>
</dbReference>
<dbReference type="STRING" id="44689.Q9Y0B7"/>
<dbReference type="PaxDb" id="44689-DDB0185222"/>
<dbReference type="EnsemblProtists" id="EAL71210">
    <property type="protein sequence ID" value="EAL71210"/>
    <property type="gene ID" value="DDB_G0272116"/>
</dbReference>
<dbReference type="GeneID" id="8618358"/>
<dbReference type="KEGG" id="ddi:DDB_G0272116"/>
<dbReference type="dictyBase" id="DDB_G0272116">
    <property type="gene designation" value="ppp4c"/>
</dbReference>
<dbReference type="VEuPathDB" id="AmoebaDB:DDB_G0272116"/>
<dbReference type="eggNOG" id="KOG0372">
    <property type="taxonomic scope" value="Eukaryota"/>
</dbReference>
<dbReference type="HOGENOM" id="CLU_004962_8_1_1"/>
<dbReference type="InParanoid" id="Q9Y0B7"/>
<dbReference type="OMA" id="QSTMPID"/>
<dbReference type="PhylomeDB" id="Q9Y0B7"/>
<dbReference type="PRO" id="PR:Q9Y0B7"/>
<dbReference type="Proteomes" id="UP000002195">
    <property type="component" value="Chromosome 2"/>
</dbReference>
<dbReference type="GO" id="GO:0005737">
    <property type="term" value="C:cytoplasm"/>
    <property type="evidence" value="ECO:0000314"/>
    <property type="project" value="dictyBase"/>
</dbReference>
<dbReference type="GO" id="GO:0005634">
    <property type="term" value="C:nucleus"/>
    <property type="evidence" value="ECO:0007669"/>
    <property type="project" value="UniProtKB-SubCell"/>
</dbReference>
<dbReference type="GO" id="GO:0030289">
    <property type="term" value="C:protein phosphatase 4 complex"/>
    <property type="evidence" value="ECO:0000314"/>
    <property type="project" value="dictyBase"/>
</dbReference>
<dbReference type="GO" id="GO:0046872">
    <property type="term" value="F:metal ion binding"/>
    <property type="evidence" value="ECO:0007669"/>
    <property type="project" value="UniProtKB-KW"/>
</dbReference>
<dbReference type="GO" id="GO:0004722">
    <property type="term" value="F:protein serine/threonine phosphatase activity"/>
    <property type="evidence" value="ECO:0000314"/>
    <property type="project" value="dictyBase"/>
</dbReference>
<dbReference type="GO" id="GO:0000724">
    <property type="term" value="P:double-strand break repair via homologous recombination"/>
    <property type="evidence" value="ECO:0000318"/>
    <property type="project" value="GO_Central"/>
</dbReference>
<dbReference type="GO" id="GO:0050920">
    <property type="term" value="P:regulation of chemotaxis"/>
    <property type="evidence" value="ECO:0000316"/>
    <property type="project" value="dictyBase"/>
</dbReference>
<dbReference type="GO" id="GO:0031156">
    <property type="term" value="P:regulation of sorocarp development"/>
    <property type="evidence" value="ECO:0000315"/>
    <property type="project" value="dictyBase"/>
</dbReference>
<dbReference type="CDD" id="cd07415">
    <property type="entry name" value="MPP_PP2A_PP4_PP6"/>
    <property type="match status" value="1"/>
</dbReference>
<dbReference type="FunFam" id="3.60.21.10:FF:000010">
    <property type="entry name" value="Serine/threonine-protein phosphatase"/>
    <property type="match status" value="1"/>
</dbReference>
<dbReference type="Gene3D" id="3.60.21.10">
    <property type="match status" value="1"/>
</dbReference>
<dbReference type="InterPro" id="IPR004843">
    <property type="entry name" value="Calcineurin-like_PHP_ApaH"/>
</dbReference>
<dbReference type="InterPro" id="IPR029052">
    <property type="entry name" value="Metallo-depent_PP-like"/>
</dbReference>
<dbReference type="InterPro" id="IPR047129">
    <property type="entry name" value="PPA2-like"/>
</dbReference>
<dbReference type="InterPro" id="IPR006186">
    <property type="entry name" value="Ser/Thr-sp_prot-phosphatase"/>
</dbReference>
<dbReference type="PANTHER" id="PTHR45619">
    <property type="entry name" value="SERINE/THREONINE-PROTEIN PHOSPHATASE PP2A-RELATED"/>
    <property type="match status" value="1"/>
</dbReference>
<dbReference type="Pfam" id="PF00149">
    <property type="entry name" value="Metallophos"/>
    <property type="match status" value="1"/>
</dbReference>
<dbReference type="PRINTS" id="PR00114">
    <property type="entry name" value="STPHPHTASE"/>
</dbReference>
<dbReference type="SMART" id="SM00156">
    <property type="entry name" value="PP2Ac"/>
    <property type="match status" value="1"/>
</dbReference>
<dbReference type="SUPFAM" id="SSF56300">
    <property type="entry name" value="Metallo-dependent phosphatases"/>
    <property type="match status" value="1"/>
</dbReference>
<dbReference type="PROSITE" id="PS00125">
    <property type="entry name" value="SER_THR_PHOSPHATASE"/>
    <property type="match status" value="1"/>
</dbReference>
<feature type="chain" id="PRO_0000327847" description="Serine/threonine-protein phosphatase 4 catalytic subunit">
    <location>
        <begin position="1"/>
        <end position="305"/>
    </location>
</feature>
<feature type="active site" description="Proton donor" evidence="1">
    <location>
        <position position="113"/>
    </location>
</feature>
<feature type="binding site" evidence="1">
    <location>
        <position position="52"/>
    </location>
    <ligand>
        <name>Mn(2+)</name>
        <dbReference type="ChEBI" id="CHEBI:29035"/>
        <label>1</label>
    </ligand>
</feature>
<feature type="binding site" evidence="1">
    <location>
        <position position="54"/>
    </location>
    <ligand>
        <name>Mn(2+)</name>
        <dbReference type="ChEBI" id="CHEBI:29035"/>
        <label>1</label>
    </ligand>
</feature>
<feature type="binding site" evidence="1">
    <location>
        <position position="80"/>
    </location>
    <ligand>
        <name>Mn(2+)</name>
        <dbReference type="ChEBI" id="CHEBI:29035"/>
        <label>1</label>
    </ligand>
</feature>
<feature type="binding site" evidence="1">
    <location>
        <position position="80"/>
    </location>
    <ligand>
        <name>Mn(2+)</name>
        <dbReference type="ChEBI" id="CHEBI:29035"/>
        <label>2</label>
    </ligand>
</feature>
<feature type="binding site" evidence="1">
    <location>
        <position position="112"/>
    </location>
    <ligand>
        <name>Mn(2+)</name>
        <dbReference type="ChEBI" id="CHEBI:29035"/>
        <label>2</label>
    </ligand>
</feature>
<feature type="binding site" evidence="1">
    <location>
        <position position="162"/>
    </location>
    <ligand>
        <name>Mn(2+)</name>
        <dbReference type="ChEBI" id="CHEBI:29035"/>
        <label>2</label>
    </ligand>
</feature>
<feature type="binding site" evidence="1">
    <location>
        <position position="236"/>
    </location>
    <ligand>
        <name>Mn(2+)</name>
        <dbReference type="ChEBI" id="CHEBI:29035"/>
        <label>2</label>
    </ligand>
</feature>
<name>PP4C_DICDI</name>
<protein>
    <recommendedName>
        <fullName>Serine/threonine-protein phosphatase 4 catalytic subunit</fullName>
        <shortName>PP4C</shortName>
        <ecNumber>3.1.3.16</ecNumber>
    </recommendedName>
</protein>
<comment type="function">
    <text evidence="2">Required for development, chemotaxis and the expression of numerous genes.</text>
</comment>
<comment type="catalytic activity">
    <reaction>
        <text>O-phospho-L-seryl-[protein] + H2O = L-seryl-[protein] + phosphate</text>
        <dbReference type="Rhea" id="RHEA:20629"/>
        <dbReference type="Rhea" id="RHEA-COMP:9863"/>
        <dbReference type="Rhea" id="RHEA-COMP:11604"/>
        <dbReference type="ChEBI" id="CHEBI:15377"/>
        <dbReference type="ChEBI" id="CHEBI:29999"/>
        <dbReference type="ChEBI" id="CHEBI:43474"/>
        <dbReference type="ChEBI" id="CHEBI:83421"/>
        <dbReference type="EC" id="3.1.3.16"/>
    </reaction>
</comment>
<comment type="catalytic activity">
    <reaction>
        <text>O-phospho-L-threonyl-[protein] + H2O = L-threonyl-[protein] + phosphate</text>
        <dbReference type="Rhea" id="RHEA:47004"/>
        <dbReference type="Rhea" id="RHEA-COMP:11060"/>
        <dbReference type="Rhea" id="RHEA-COMP:11605"/>
        <dbReference type="ChEBI" id="CHEBI:15377"/>
        <dbReference type="ChEBI" id="CHEBI:30013"/>
        <dbReference type="ChEBI" id="CHEBI:43474"/>
        <dbReference type="ChEBI" id="CHEBI:61977"/>
        <dbReference type="EC" id="3.1.3.16"/>
    </reaction>
</comment>
<comment type="cofactor">
    <cofactor evidence="1">
        <name>Mn(2+)</name>
        <dbReference type="ChEBI" id="CHEBI:29035"/>
    </cofactor>
    <text evidence="1">Binds 2 manganese ions per subunit.</text>
</comment>
<comment type="subunit">
    <text evidence="2">Serine/threonine-protein phosphatase 4 (PP4) occurs in different assemblies of the catalytic and one or more regulatory subunits. Probably part of a PP4 complex containing ppp4c and ppp4r2. Interacts with smkA.</text>
</comment>
<comment type="interaction">
    <interactant intactId="EBI-2015876">
        <id>Q9Y0B7</id>
    </interactant>
    <interactant intactId="EBI-2015890">
        <id>Q54I18</id>
        <label>smkA</label>
    </interactant>
    <organismsDiffer>false</organismsDiffer>
    <experiments>2</experiments>
</comment>
<comment type="subcellular location">
    <subcellularLocation>
        <location evidence="2">Cytoplasm</location>
    </subcellularLocation>
    <subcellularLocation>
        <location evidence="2">Nucleus</location>
    </subcellularLocation>
    <text>Translocated to the nucleus in aggregation-competent cells, probably by smkA.</text>
</comment>
<comment type="similarity">
    <text evidence="3">Belongs to the PPP phosphatase family. PP-4 (PP-X) subfamily.</text>
</comment>